<accession>A2AG50</accession>
<accession>A2AG54</accession>
<accession>Q8BLE6</accession>
<accession>Q8BMQ4</accession>
<accession>Q9D2A4</accession>
<feature type="chain" id="PRO_0000306810" description="MAP7 domain-containing protein 2">
    <location>
        <begin position="1"/>
        <end position="781"/>
    </location>
</feature>
<feature type="region of interest" description="Disordered" evidence="4">
    <location>
        <begin position="1"/>
        <end position="37"/>
    </location>
</feature>
<feature type="region of interest" description="Disordered" evidence="4">
    <location>
        <begin position="50"/>
        <end position="87"/>
    </location>
</feature>
<feature type="region of interest" description="Disordered" evidence="4">
    <location>
        <begin position="120"/>
        <end position="567"/>
    </location>
</feature>
<feature type="region of interest" description="Disordered" evidence="4">
    <location>
        <begin position="597"/>
        <end position="628"/>
    </location>
</feature>
<feature type="coiled-coil region" evidence="3">
    <location>
        <begin position="73"/>
        <end position="168"/>
    </location>
</feature>
<feature type="compositionally biased region" description="Gly residues" evidence="4">
    <location>
        <begin position="1"/>
        <end position="32"/>
    </location>
</feature>
<feature type="compositionally biased region" description="Basic and acidic residues" evidence="4">
    <location>
        <begin position="71"/>
        <end position="87"/>
    </location>
</feature>
<feature type="compositionally biased region" description="Basic and acidic residues" evidence="4">
    <location>
        <begin position="120"/>
        <end position="158"/>
    </location>
</feature>
<feature type="compositionally biased region" description="Low complexity" evidence="4">
    <location>
        <begin position="192"/>
        <end position="210"/>
    </location>
</feature>
<feature type="compositionally biased region" description="Polar residues" evidence="4">
    <location>
        <begin position="211"/>
        <end position="245"/>
    </location>
</feature>
<feature type="compositionally biased region" description="Polar residues" evidence="4">
    <location>
        <begin position="257"/>
        <end position="267"/>
    </location>
</feature>
<feature type="compositionally biased region" description="Basic and acidic residues" evidence="4">
    <location>
        <begin position="318"/>
        <end position="328"/>
    </location>
</feature>
<feature type="compositionally biased region" description="Polar residues" evidence="4">
    <location>
        <begin position="329"/>
        <end position="348"/>
    </location>
</feature>
<feature type="compositionally biased region" description="Basic and acidic residues" evidence="4">
    <location>
        <begin position="370"/>
        <end position="387"/>
    </location>
</feature>
<feature type="compositionally biased region" description="Basic and acidic residues" evidence="4">
    <location>
        <begin position="397"/>
        <end position="436"/>
    </location>
</feature>
<feature type="compositionally biased region" description="Basic and acidic residues" evidence="4">
    <location>
        <begin position="453"/>
        <end position="567"/>
    </location>
</feature>
<feature type="compositionally biased region" description="Basic and acidic residues" evidence="4">
    <location>
        <begin position="597"/>
        <end position="613"/>
    </location>
</feature>
<feature type="splice variant" id="VSP_028494" description="In isoform 2 and isoform 3." evidence="6">
    <location>
        <begin position="1"/>
        <end position="151"/>
    </location>
</feature>
<feature type="splice variant" id="VSP_028495" description="In isoform 2 and isoform 3." evidence="6">
    <location>
        <begin position="182"/>
        <end position="214"/>
    </location>
</feature>
<feature type="splice variant" id="VSP_028496" description="In isoform 3." evidence="6">
    <original>L</original>
    <variation>M</variation>
    <location>
        <position position="480"/>
    </location>
</feature>
<feature type="splice variant" id="VSP_028497" description="In isoform 3." evidence="6">
    <location>
        <begin position="481"/>
        <end position="781"/>
    </location>
</feature>
<sequence>MERSGGNGGGGGGGGGGGGGYGGSGGGGGGAGVPSEGAAKGLSLLLAKSAEAASGRASQSTPRSAGMDGFLKSDERQRLAKERREEREKCLAAREQQILEKQKRAKLQYEKQIEERWRKLEEQRQREDQKRAAVEEKRKQKLREEEERLEAMMRRSLERTQQLELKKKCSWAGSPGPGGRDGESENTPPLPLTLATSTPPLDTGTTTAAAESTNACDKLSTSTMNLPKQTESPMSKHLSSSTVAISYSPDRALGSPLKSSYKSSPTRTTEKKKNTPISAMGDAGKGAMAGGEPSQMEKMKKGRVATSAASGGHGSPLRRCEPPEDISKRLSSPVKSKITSKTYPQSPKTAKPTYLGSPVKYYFPPIANEETPKKKAEKEKRNKEKEGAPGQQSTVLPREESLEKRMADKYATEKYVADKHATEKHSAPGGKAEHSAGKPTAGTTDAGEAAKILAEKRRQARLQKEQEEQERLEKEERERLEKEELKRKAEEERLRIEMAYKREQEKKRQEEEEKRKAEEKAKEKAEEELLSKEKQEKEKQEQEKKEKAMIEKQKEAAEAKAQDAAKQMRLEREQIMLQIEQERLERKKRIDEIMKRTRKSDASLEVKKEDPKVELQPPPDVENKANKAKPVVPNKIEINVLNTCQKVSGSERAAPETFPQDIFSTGLKPVGGPVHLDVLDGKSNSLDDSTEDVQSMDVSPVSKEELISIPEFSPVSEMIPGMSLDQNGTGNARALQDILDFTGPPAFPKKSSENLSLDDCNKNLIEGFNSPGQETTLNTFC</sequence>
<gene>
    <name type="primary">Map7d2</name>
    <name type="synonym">Mtap7d2</name>
</gene>
<organism>
    <name type="scientific">Mus musculus</name>
    <name type="common">Mouse</name>
    <dbReference type="NCBI Taxonomy" id="10090"/>
    <lineage>
        <taxon>Eukaryota</taxon>
        <taxon>Metazoa</taxon>
        <taxon>Chordata</taxon>
        <taxon>Craniata</taxon>
        <taxon>Vertebrata</taxon>
        <taxon>Euteleostomi</taxon>
        <taxon>Mammalia</taxon>
        <taxon>Eutheria</taxon>
        <taxon>Euarchontoglires</taxon>
        <taxon>Glires</taxon>
        <taxon>Rodentia</taxon>
        <taxon>Myomorpha</taxon>
        <taxon>Muroidea</taxon>
        <taxon>Muridae</taxon>
        <taxon>Murinae</taxon>
        <taxon>Mus</taxon>
        <taxon>Mus</taxon>
    </lineage>
</organism>
<keyword id="KW-0025">Alternative splicing</keyword>
<keyword id="KW-0966">Cell projection</keyword>
<keyword id="KW-0175">Coiled coil</keyword>
<keyword id="KW-0963">Cytoplasm</keyword>
<keyword id="KW-0206">Cytoskeleton</keyword>
<keyword id="KW-1185">Reference proteome</keyword>
<reference key="1">
    <citation type="journal article" date="2005" name="Science">
        <title>The transcriptional landscape of the mammalian genome.</title>
        <authorList>
            <person name="Carninci P."/>
            <person name="Kasukawa T."/>
            <person name="Katayama S."/>
            <person name="Gough J."/>
            <person name="Frith M.C."/>
            <person name="Maeda N."/>
            <person name="Oyama R."/>
            <person name="Ravasi T."/>
            <person name="Lenhard B."/>
            <person name="Wells C."/>
            <person name="Kodzius R."/>
            <person name="Shimokawa K."/>
            <person name="Bajic V.B."/>
            <person name="Brenner S.E."/>
            <person name="Batalov S."/>
            <person name="Forrest A.R."/>
            <person name="Zavolan M."/>
            <person name="Davis M.J."/>
            <person name="Wilming L.G."/>
            <person name="Aidinis V."/>
            <person name="Allen J.E."/>
            <person name="Ambesi-Impiombato A."/>
            <person name="Apweiler R."/>
            <person name="Aturaliya R.N."/>
            <person name="Bailey T.L."/>
            <person name="Bansal M."/>
            <person name="Baxter L."/>
            <person name="Beisel K.W."/>
            <person name="Bersano T."/>
            <person name="Bono H."/>
            <person name="Chalk A.M."/>
            <person name="Chiu K.P."/>
            <person name="Choudhary V."/>
            <person name="Christoffels A."/>
            <person name="Clutterbuck D.R."/>
            <person name="Crowe M.L."/>
            <person name="Dalla E."/>
            <person name="Dalrymple B.P."/>
            <person name="de Bono B."/>
            <person name="Della Gatta G."/>
            <person name="di Bernardo D."/>
            <person name="Down T."/>
            <person name="Engstrom P."/>
            <person name="Fagiolini M."/>
            <person name="Faulkner G."/>
            <person name="Fletcher C.F."/>
            <person name="Fukushima T."/>
            <person name="Furuno M."/>
            <person name="Futaki S."/>
            <person name="Gariboldi M."/>
            <person name="Georgii-Hemming P."/>
            <person name="Gingeras T.R."/>
            <person name="Gojobori T."/>
            <person name="Green R.E."/>
            <person name="Gustincich S."/>
            <person name="Harbers M."/>
            <person name="Hayashi Y."/>
            <person name="Hensch T.K."/>
            <person name="Hirokawa N."/>
            <person name="Hill D."/>
            <person name="Huminiecki L."/>
            <person name="Iacono M."/>
            <person name="Ikeo K."/>
            <person name="Iwama A."/>
            <person name="Ishikawa T."/>
            <person name="Jakt M."/>
            <person name="Kanapin A."/>
            <person name="Katoh M."/>
            <person name="Kawasawa Y."/>
            <person name="Kelso J."/>
            <person name="Kitamura H."/>
            <person name="Kitano H."/>
            <person name="Kollias G."/>
            <person name="Krishnan S.P."/>
            <person name="Kruger A."/>
            <person name="Kummerfeld S.K."/>
            <person name="Kurochkin I.V."/>
            <person name="Lareau L.F."/>
            <person name="Lazarevic D."/>
            <person name="Lipovich L."/>
            <person name="Liu J."/>
            <person name="Liuni S."/>
            <person name="McWilliam S."/>
            <person name="Madan Babu M."/>
            <person name="Madera M."/>
            <person name="Marchionni L."/>
            <person name="Matsuda H."/>
            <person name="Matsuzawa S."/>
            <person name="Miki H."/>
            <person name="Mignone F."/>
            <person name="Miyake S."/>
            <person name="Morris K."/>
            <person name="Mottagui-Tabar S."/>
            <person name="Mulder N."/>
            <person name="Nakano N."/>
            <person name="Nakauchi H."/>
            <person name="Ng P."/>
            <person name="Nilsson R."/>
            <person name="Nishiguchi S."/>
            <person name="Nishikawa S."/>
            <person name="Nori F."/>
            <person name="Ohara O."/>
            <person name="Okazaki Y."/>
            <person name="Orlando V."/>
            <person name="Pang K.C."/>
            <person name="Pavan W.J."/>
            <person name="Pavesi G."/>
            <person name="Pesole G."/>
            <person name="Petrovsky N."/>
            <person name="Piazza S."/>
            <person name="Reed J."/>
            <person name="Reid J.F."/>
            <person name="Ring B.Z."/>
            <person name="Ringwald M."/>
            <person name="Rost B."/>
            <person name="Ruan Y."/>
            <person name="Salzberg S.L."/>
            <person name="Sandelin A."/>
            <person name="Schneider C."/>
            <person name="Schoenbach C."/>
            <person name="Sekiguchi K."/>
            <person name="Semple C.A."/>
            <person name="Seno S."/>
            <person name="Sessa L."/>
            <person name="Sheng Y."/>
            <person name="Shibata Y."/>
            <person name="Shimada H."/>
            <person name="Shimada K."/>
            <person name="Silva D."/>
            <person name="Sinclair B."/>
            <person name="Sperling S."/>
            <person name="Stupka E."/>
            <person name="Sugiura K."/>
            <person name="Sultana R."/>
            <person name="Takenaka Y."/>
            <person name="Taki K."/>
            <person name="Tammoja K."/>
            <person name="Tan S.L."/>
            <person name="Tang S."/>
            <person name="Taylor M.S."/>
            <person name="Tegner J."/>
            <person name="Teichmann S.A."/>
            <person name="Ueda H.R."/>
            <person name="van Nimwegen E."/>
            <person name="Verardo R."/>
            <person name="Wei C.L."/>
            <person name="Yagi K."/>
            <person name="Yamanishi H."/>
            <person name="Zabarovsky E."/>
            <person name="Zhu S."/>
            <person name="Zimmer A."/>
            <person name="Hide W."/>
            <person name="Bult C."/>
            <person name="Grimmond S.M."/>
            <person name="Teasdale R.D."/>
            <person name="Liu E.T."/>
            <person name="Brusic V."/>
            <person name="Quackenbush J."/>
            <person name="Wahlestedt C."/>
            <person name="Mattick J.S."/>
            <person name="Hume D.A."/>
            <person name="Kai C."/>
            <person name="Sasaki D."/>
            <person name="Tomaru Y."/>
            <person name="Fukuda S."/>
            <person name="Kanamori-Katayama M."/>
            <person name="Suzuki M."/>
            <person name="Aoki J."/>
            <person name="Arakawa T."/>
            <person name="Iida J."/>
            <person name="Imamura K."/>
            <person name="Itoh M."/>
            <person name="Kato T."/>
            <person name="Kawaji H."/>
            <person name="Kawagashira N."/>
            <person name="Kawashima T."/>
            <person name="Kojima M."/>
            <person name="Kondo S."/>
            <person name="Konno H."/>
            <person name="Nakano K."/>
            <person name="Ninomiya N."/>
            <person name="Nishio T."/>
            <person name="Okada M."/>
            <person name="Plessy C."/>
            <person name="Shibata K."/>
            <person name="Shiraki T."/>
            <person name="Suzuki S."/>
            <person name="Tagami M."/>
            <person name="Waki K."/>
            <person name="Watahiki A."/>
            <person name="Okamura-Oho Y."/>
            <person name="Suzuki H."/>
            <person name="Kawai J."/>
            <person name="Hayashizaki Y."/>
        </authorList>
    </citation>
    <scope>NUCLEOTIDE SEQUENCE [LARGE SCALE MRNA] (ISOFORMS 2 AND 3)</scope>
    <source>
        <strain>C57BL/6J</strain>
        <tissue>Corpora quadrigemina</tissue>
        <tissue>Pituitary</tissue>
    </source>
</reference>
<reference key="2">
    <citation type="journal article" date="2009" name="PLoS Biol.">
        <title>Lineage-specific biology revealed by a finished genome assembly of the mouse.</title>
        <authorList>
            <person name="Church D.M."/>
            <person name="Goodstadt L."/>
            <person name="Hillier L.W."/>
            <person name="Zody M.C."/>
            <person name="Goldstein S."/>
            <person name="She X."/>
            <person name="Bult C.J."/>
            <person name="Agarwala R."/>
            <person name="Cherry J.L."/>
            <person name="DiCuccio M."/>
            <person name="Hlavina W."/>
            <person name="Kapustin Y."/>
            <person name="Meric P."/>
            <person name="Maglott D."/>
            <person name="Birtle Z."/>
            <person name="Marques A.C."/>
            <person name="Graves T."/>
            <person name="Zhou S."/>
            <person name="Teague B."/>
            <person name="Potamousis K."/>
            <person name="Churas C."/>
            <person name="Place M."/>
            <person name="Herschleb J."/>
            <person name="Runnheim R."/>
            <person name="Forrest D."/>
            <person name="Amos-Landgraf J."/>
            <person name="Schwartz D.C."/>
            <person name="Cheng Z."/>
            <person name="Lindblad-Toh K."/>
            <person name="Eichler E.E."/>
            <person name="Ponting C.P."/>
        </authorList>
    </citation>
    <scope>NUCLEOTIDE SEQUENCE [LARGE SCALE GENOMIC DNA]</scope>
    <source>
        <strain>C57BL/6J</strain>
    </source>
</reference>
<reference key="3">
    <citation type="journal article" date="2006" name="Mol. Cell. Proteomics">
        <title>Comprehensive identification of phosphorylation sites in postsynaptic density preparations.</title>
        <authorList>
            <person name="Trinidad J.C."/>
            <person name="Specht C.G."/>
            <person name="Thalhammer A."/>
            <person name="Schoepfer R."/>
            <person name="Burlingame A.L."/>
        </authorList>
    </citation>
    <scope>IDENTIFICATION BY MASS SPECTROMETRY [LARGE SCALE ANALYSIS]</scope>
    <source>
        <tissue>Brain</tissue>
    </source>
</reference>
<reference key="4">
    <citation type="journal article" date="2010" name="Cell">
        <title>A tissue-specific atlas of mouse protein phosphorylation and expression.</title>
        <authorList>
            <person name="Huttlin E.L."/>
            <person name="Jedrychowski M.P."/>
            <person name="Elias J.E."/>
            <person name="Goswami T."/>
            <person name="Rad R."/>
            <person name="Beausoleil S.A."/>
            <person name="Villen J."/>
            <person name="Haas W."/>
            <person name="Sowa M.E."/>
            <person name="Gygi S.P."/>
        </authorList>
    </citation>
    <scope>IDENTIFICATION BY MASS SPECTROMETRY [LARGE SCALE ANALYSIS]</scope>
    <source>
        <tissue>Brain</tissue>
        <tissue>Testis</tissue>
    </source>
</reference>
<reference key="5">
    <citation type="journal article" date="2022" name="Life. Sci Alliance">
        <title>Map7D2 and Map7D1 facilitate microtubule stabilization through distinct mechanisms in neuronal cells.</title>
        <authorList>
            <person name="Kikuchi K."/>
            <person name="Sakamoto Y."/>
            <person name="Uezu A."/>
            <person name="Yamamoto H."/>
            <person name="Ishiguro K.I."/>
            <person name="Shimamura K."/>
            <person name="Saito T."/>
            <person name="Hisanaga S.I."/>
            <person name="Nakanishi H."/>
        </authorList>
    </citation>
    <scope>TISSUE SPECIFICITY</scope>
    <scope>SUBCELLULAR LOCATION</scope>
    <scope>FUNCTION</scope>
</reference>
<proteinExistence type="evidence at protein level"/>
<protein>
    <recommendedName>
        <fullName>MAP7 domain-containing protein 2</fullName>
    </recommendedName>
</protein>
<evidence type="ECO:0000250" key="1">
    <source>
        <dbReference type="UniProtKB" id="D4A4L4"/>
    </source>
</evidence>
<evidence type="ECO:0000250" key="2">
    <source>
        <dbReference type="UniProtKB" id="Q96T17"/>
    </source>
</evidence>
<evidence type="ECO:0000255" key="3"/>
<evidence type="ECO:0000256" key="4">
    <source>
        <dbReference type="SAM" id="MobiDB-lite"/>
    </source>
</evidence>
<evidence type="ECO:0000269" key="5">
    <source>
    </source>
</evidence>
<evidence type="ECO:0000303" key="6">
    <source>
    </source>
</evidence>
<evidence type="ECO:0000305" key="7"/>
<dbReference type="EMBL" id="AK019929">
    <property type="protein sequence ID" value="BAB31923.1"/>
    <property type="molecule type" value="mRNA"/>
</dbReference>
<dbReference type="EMBL" id="AK030316">
    <property type="protein sequence ID" value="BAC26896.1"/>
    <property type="status" value="ALT_FRAME"/>
    <property type="molecule type" value="mRNA"/>
</dbReference>
<dbReference type="EMBL" id="AK045412">
    <property type="protein sequence ID" value="BAC32351.1"/>
    <property type="molecule type" value="mRNA"/>
</dbReference>
<dbReference type="EMBL" id="AL672284">
    <property type="status" value="NOT_ANNOTATED_CDS"/>
    <property type="molecule type" value="Genomic_DNA"/>
</dbReference>
<dbReference type="CCDS" id="CCDS41193.1">
    <molecule id="A2AG50-1"/>
</dbReference>
<dbReference type="CCDS" id="CCDS85823.1">
    <molecule id="A2AG50-3"/>
</dbReference>
<dbReference type="CCDS" id="CCDS85824.1">
    <molecule id="A2AG50-2"/>
</dbReference>
<dbReference type="RefSeq" id="NP_001074593.1">
    <molecule id="A2AG50-1"/>
    <property type="nucleotide sequence ID" value="NM_001081124.2"/>
</dbReference>
<dbReference type="RefSeq" id="NP_001300680.1">
    <property type="nucleotide sequence ID" value="NM_001313751.1"/>
</dbReference>
<dbReference type="RefSeq" id="NP_001300681.1">
    <molecule id="A2AG50-3"/>
    <property type="nucleotide sequence ID" value="NM_001313752.1"/>
</dbReference>
<dbReference type="RefSeq" id="NP_001300682.1">
    <molecule id="A2AG50-2"/>
    <property type="nucleotide sequence ID" value="NM_001313753.1"/>
</dbReference>
<dbReference type="RefSeq" id="XP_030107379.1">
    <molecule id="A2AG50-2"/>
    <property type="nucleotide sequence ID" value="XM_030251519.2"/>
</dbReference>
<dbReference type="SMR" id="A2AG50"/>
<dbReference type="BioGRID" id="219302">
    <property type="interactions" value="5"/>
</dbReference>
<dbReference type="FunCoup" id="A2AG50">
    <property type="interactions" value="164"/>
</dbReference>
<dbReference type="STRING" id="10090.ENSMUSP00000108090"/>
<dbReference type="GlyGen" id="A2AG50">
    <property type="glycosylation" value="2 sites, 1 O-linked glycan (2 sites)"/>
</dbReference>
<dbReference type="iPTMnet" id="A2AG50"/>
<dbReference type="PhosphoSitePlus" id="A2AG50"/>
<dbReference type="SwissPalm" id="A2AG50"/>
<dbReference type="jPOST" id="A2AG50"/>
<dbReference type="PaxDb" id="10090-ENSMUSP00000108090"/>
<dbReference type="PeptideAtlas" id="A2AG50"/>
<dbReference type="ProteomicsDB" id="292142">
    <molecule id="A2AG50-1"/>
</dbReference>
<dbReference type="ProteomicsDB" id="292143">
    <molecule id="A2AG50-2"/>
</dbReference>
<dbReference type="ProteomicsDB" id="292144">
    <molecule id="A2AG50-3"/>
</dbReference>
<dbReference type="Antibodypedia" id="63281">
    <property type="antibodies" value="12 antibodies from 7 providers"/>
</dbReference>
<dbReference type="DNASU" id="78283"/>
<dbReference type="Ensembl" id="ENSMUST00000043151.12">
    <molecule id="A2AG50-2"/>
    <property type="protein sequence ID" value="ENSMUSP00000046693.6"/>
    <property type="gene ID" value="ENSMUSG00000041020.15"/>
</dbReference>
<dbReference type="Ensembl" id="ENSMUST00000112470.3">
    <molecule id="A2AG50-3"/>
    <property type="protein sequence ID" value="ENSMUSP00000108089.2"/>
    <property type="gene ID" value="ENSMUSG00000041020.15"/>
</dbReference>
<dbReference type="Ensembl" id="ENSMUST00000112471.9">
    <molecule id="A2AG50-1"/>
    <property type="protein sequence ID" value="ENSMUSP00000108090.3"/>
    <property type="gene ID" value="ENSMUSG00000041020.15"/>
</dbReference>
<dbReference type="GeneID" id="78283"/>
<dbReference type="KEGG" id="mmu:78283"/>
<dbReference type="UCSC" id="uc009usn.1">
    <molecule id="A2AG50-1"/>
    <property type="organism name" value="mouse"/>
</dbReference>
<dbReference type="UCSC" id="uc009uso.1">
    <molecule id="A2AG50-2"/>
    <property type="organism name" value="mouse"/>
</dbReference>
<dbReference type="UCSC" id="uc009usp.1">
    <molecule id="A2AG50-3"/>
    <property type="organism name" value="mouse"/>
</dbReference>
<dbReference type="AGR" id="MGI:1917474"/>
<dbReference type="CTD" id="256714"/>
<dbReference type="MGI" id="MGI:1917474">
    <property type="gene designation" value="Map7d2"/>
</dbReference>
<dbReference type="VEuPathDB" id="HostDB:ENSMUSG00000041020"/>
<dbReference type="eggNOG" id="ENOG502QTSG">
    <property type="taxonomic scope" value="Eukaryota"/>
</dbReference>
<dbReference type="GeneTree" id="ENSGT00950000182941"/>
<dbReference type="HOGENOM" id="CLU_017315_1_0_1"/>
<dbReference type="InParanoid" id="A2AG50"/>
<dbReference type="OMA" id="QMEPPMS"/>
<dbReference type="OrthoDB" id="9950098at2759"/>
<dbReference type="PhylomeDB" id="A2AG50"/>
<dbReference type="TreeFam" id="TF332273"/>
<dbReference type="BioGRID-ORCS" id="78283">
    <property type="hits" value="0 hits in 78 CRISPR screens"/>
</dbReference>
<dbReference type="CD-CODE" id="CE726F99">
    <property type="entry name" value="Postsynaptic density"/>
</dbReference>
<dbReference type="PRO" id="PR:A2AG50"/>
<dbReference type="Proteomes" id="UP000000589">
    <property type="component" value="Chromosome X"/>
</dbReference>
<dbReference type="RNAct" id="A2AG50">
    <property type="molecule type" value="protein"/>
</dbReference>
<dbReference type="Bgee" id="ENSMUSG00000041020">
    <property type="expression patterns" value="Expressed in pontine nuclear group and 164 other cell types or tissues"/>
</dbReference>
<dbReference type="ExpressionAtlas" id="A2AG50">
    <property type="expression patterns" value="baseline and differential"/>
</dbReference>
<dbReference type="GO" id="GO:0030424">
    <property type="term" value="C:axon"/>
    <property type="evidence" value="ECO:0007669"/>
    <property type="project" value="UniProtKB-SubCell"/>
</dbReference>
<dbReference type="GO" id="GO:0005813">
    <property type="term" value="C:centrosome"/>
    <property type="evidence" value="ECO:0000314"/>
    <property type="project" value="UniProtKB"/>
</dbReference>
<dbReference type="GO" id="GO:0005874">
    <property type="term" value="C:microtubule"/>
    <property type="evidence" value="ECO:0000314"/>
    <property type="project" value="UniProtKB"/>
</dbReference>
<dbReference type="GO" id="GO:0030496">
    <property type="term" value="C:midbody"/>
    <property type="evidence" value="ECO:0000314"/>
    <property type="project" value="UniProtKB"/>
</dbReference>
<dbReference type="GO" id="GO:0043005">
    <property type="term" value="C:neuron projection"/>
    <property type="evidence" value="ECO:0000314"/>
    <property type="project" value="UniProtKB"/>
</dbReference>
<dbReference type="GO" id="GO:0019894">
    <property type="term" value="F:kinesin binding"/>
    <property type="evidence" value="ECO:0000314"/>
    <property type="project" value="UniProtKB"/>
</dbReference>
<dbReference type="GO" id="GO:0008017">
    <property type="term" value="F:microtubule binding"/>
    <property type="evidence" value="ECO:0000315"/>
    <property type="project" value="UniProtKB"/>
</dbReference>
<dbReference type="GO" id="GO:0061564">
    <property type="term" value="P:axon development"/>
    <property type="evidence" value="ECO:0007669"/>
    <property type="project" value="Ensembl"/>
</dbReference>
<dbReference type="GO" id="GO:0000226">
    <property type="term" value="P:microtubule cytoskeleton organization"/>
    <property type="evidence" value="ECO:0000314"/>
    <property type="project" value="UniProtKB"/>
</dbReference>
<dbReference type="InterPro" id="IPR051483">
    <property type="entry name" value="MAP7_domain-containing"/>
</dbReference>
<dbReference type="InterPro" id="IPR008604">
    <property type="entry name" value="MAP7_fam"/>
</dbReference>
<dbReference type="PANTHER" id="PTHR15073:SF3">
    <property type="entry name" value="MAP7 DOMAIN-CONTAINING PROTEIN 2"/>
    <property type="match status" value="1"/>
</dbReference>
<dbReference type="PANTHER" id="PTHR15073">
    <property type="entry name" value="MICROTUBULE-ASSOCIATED PROTEIN"/>
    <property type="match status" value="1"/>
</dbReference>
<dbReference type="Pfam" id="PF05672">
    <property type="entry name" value="MAP7"/>
    <property type="match status" value="1"/>
</dbReference>
<name>MA7D2_MOUSE</name>
<comment type="function">
    <text evidence="1 5">Microtubule-stabilizing protein involved in the control of cell motility and neurite outgrowth (PubMed:35470240). Acts as a critical cofactor for kinesin transport; in the proximal axon regulates kinesin-1 family members, KIF5A, KIF5B and KIF5C recruitment to microtubules and contributes to kinesin-1-mediated transport in the axons (By similarity).</text>
</comment>
<comment type="subunit">
    <text evidence="1">Interacts (via N-terminus) with microtubules; facilitates microtubule stabilization. Interacts with kinesin-1 family members, KIF5A, KIF5B and KIF5C.</text>
</comment>
<comment type="subcellular location">
    <subcellularLocation>
        <location evidence="5">Cytoplasm</location>
        <location evidence="5">Cytoskeleton</location>
        <location evidence="5">Microtubule organizing center</location>
        <location evidence="5">Centrosome</location>
    </subcellularLocation>
    <subcellularLocation>
        <location evidence="5">Midbody</location>
    </subcellularLocation>
    <subcellularLocation>
        <location evidence="5">Cytoplasm</location>
        <location evidence="5">Cytoskeleton</location>
    </subcellularLocation>
    <subcellularLocation>
        <location evidence="5">Cell projection</location>
        <location evidence="5">Neuron projection</location>
    </subcellularLocation>
    <subcellularLocation>
        <location evidence="2">Cell projection</location>
        <location evidence="2">Axon</location>
    </subcellularLocation>
    <text evidence="2 5">Strongly localizes to the centrosome and partially on microtubule (PubMed:35470240). During cytokinesis, accumulates at the midbody (PubMed:35470240). Accumulates to the proximal part of the axon (By similarity).</text>
</comment>
<comment type="alternative products">
    <event type="alternative splicing"/>
    <isoform>
        <id>A2AG50-1</id>
        <name>1</name>
        <sequence type="displayed"/>
    </isoform>
    <isoform>
        <id>A2AG50-2</id>
        <name>2</name>
        <sequence type="described" ref="VSP_028494 VSP_028495"/>
    </isoform>
    <isoform>
        <id>A2AG50-3</id>
        <name>3</name>
        <sequence type="described" ref="VSP_028494 VSP_028495 VSP_028496 VSP_028497"/>
    </isoform>
</comment>
<comment type="tissue specificity">
    <text evidence="5">Expressed predominantly in the glomerular layer of the olfactory bulb and Sertoli cells of the testis.</text>
</comment>
<comment type="similarity">
    <text evidence="7">Belongs to the MAP7 family.</text>
</comment>
<comment type="sequence caution" evidence="7">
    <conflict type="frameshift">
        <sequence resource="EMBL-CDS" id="BAC26896"/>
    </conflict>
</comment>